<evidence type="ECO:0000250" key="1"/>
<evidence type="ECO:0000250" key="2">
    <source>
        <dbReference type="UniProtKB" id="P14555"/>
    </source>
</evidence>
<evidence type="ECO:0000255" key="3">
    <source>
        <dbReference type="PROSITE-ProRule" id="PRU10035"/>
    </source>
</evidence>
<evidence type="ECO:0000255" key="4">
    <source>
        <dbReference type="PROSITE-ProRule" id="PRU10036"/>
    </source>
</evidence>
<evidence type="ECO:0000269" key="5">
    <source>
    </source>
</evidence>
<evidence type="ECO:0000269" key="6">
    <source>
    </source>
</evidence>
<evidence type="ECO:0000269" key="7">
    <source>
    </source>
</evidence>
<evidence type="ECO:0000269" key="8">
    <source>
    </source>
</evidence>
<evidence type="ECO:0000269" key="9">
    <source>
    </source>
</evidence>
<evidence type="ECO:0000269" key="10">
    <source>
    </source>
</evidence>
<evidence type="ECO:0000305" key="11"/>
<sequence>MKVLLLLAASIMAFGSIQVQGNIAQFGEMIRLKTGKRAELSYAFYGCHCGLGGKGSPKDATDRCCVTHDCCYKSLEKSGCGTKLLKYKYSHQGGQITCSANQNSCQKRLCQCDKAAAECFARNKKTYSLKYQFYPNMFCKGKKPKC</sequence>
<organism>
    <name type="scientific">Mus musculus</name>
    <name type="common">Mouse</name>
    <dbReference type="NCBI Taxonomy" id="10090"/>
    <lineage>
        <taxon>Eukaryota</taxon>
        <taxon>Metazoa</taxon>
        <taxon>Chordata</taxon>
        <taxon>Craniata</taxon>
        <taxon>Vertebrata</taxon>
        <taxon>Euteleostomi</taxon>
        <taxon>Mammalia</taxon>
        <taxon>Eutheria</taxon>
        <taxon>Euarchontoglires</taxon>
        <taxon>Glires</taxon>
        <taxon>Rodentia</taxon>
        <taxon>Myomorpha</taxon>
        <taxon>Muroidea</taxon>
        <taxon>Muridae</taxon>
        <taxon>Murinae</taxon>
        <taxon>Mus</taxon>
        <taxon>Mus</taxon>
    </lineage>
</organism>
<comment type="function">
    <text evidence="2 5 6 7 10">Secretory calcium-dependent phospholipase A2 that primarily targets extracellular phospholipids with implications in host antimicrobial defense, inflammatory response and tissue regeneration (PubMed:10358193, PubMed:11694541, PubMed:8425615). Hydrolyzes the ester bond of the fatty acyl group attached at sn-2 position of phospholipids (phospholipase A2 activity) with preference for phosphatidylethanolamines and phosphatidylglycerols over phosphatidylcholines. Contributes to lipid remodeling of cellular membranes and generation of lipid mediators involved in pathogen clearance. Displays bactericidal activity against Gram-positive bacteria by directly hydrolyzing phospholipids of the bacterial membrane (PubMed:11694541). Upon sterile inflammation, targets membrane phospholipids of extracellular mitochondria released from activated platelets, generating free unsaturated fatty acids such as arachidonate that is used by neighboring leukocytes to synthesize inflammatory eicosanoids such as leukotrienes. Simultaneously, by compromising mitochondrial membrane integrity, promotes the release in circulation of potent damage-associated molecular pattern molecules that activate the innate immune response (By similarity). Plays a stem cell regulator role in the intestinal crypt. Within intracellular compartment mediates Paneth cell differentiation and its stem cell supporting functions by inhibiting Wnt signaling pathway in intestinal stem cell (ICS). Secreted in the intestinal lumen upon inflammation, acts in an autocrine way and promotes prostaglandin E2 synthesis that stimulates Wnt signaling pathway in ICS cells and tissue regeneration (PubMed:27292189). May play a role in the biosynthesis of N-acyl ethanolamines that regulate energy metabolism and inflammation. Hydrolyzes N-acyl phosphatidylethanolamines to N-acyl lysophosphatidylethanolamines, which are further cleaved by a lysophospholipase D to release N-acyl ethanolamines (By similarity). Independent of its catalytic activity, acts as a ligand for integrins. Binds to and activates integrins ITGAV:ITGB3, ITGA4:ITGB1 and ITGA5:ITGB1. Binds to a site (site 2) which is distinct from the classical ligand-binding site (site 1) and induces integrin conformational changes and enhanced ligand binding to site 1. Induces cell proliferation in an integrin-dependent manner (By similarity).</text>
</comment>
<comment type="catalytic activity">
    <reaction evidence="2">
        <text>a 1,2-diacyl-sn-glycero-3-phosphoethanolamine + H2O = a 1-acyl-sn-glycero-3-phosphoethanolamine + a fatty acid + H(+)</text>
        <dbReference type="Rhea" id="RHEA:44604"/>
        <dbReference type="ChEBI" id="CHEBI:15377"/>
        <dbReference type="ChEBI" id="CHEBI:15378"/>
        <dbReference type="ChEBI" id="CHEBI:28868"/>
        <dbReference type="ChEBI" id="CHEBI:64381"/>
        <dbReference type="ChEBI" id="CHEBI:64612"/>
    </reaction>
    <physiologicalReaction direction="left-to-right" evidence="2">
        <dbReference type="Rhea" id="RHEA:44605"/>
    </physiologicalReaction>
</comment>
<comment type="catalytic activity">
    <reaction evidence="2">
        <text>1-hexadecanoyl-2-(9Z-octadecenoyl)-sn-glycero-3-phosphoethanolamine + H2O = 1-hexadecanoyl-sn-glycero-3-phosphoethanolamine + (9Z)-octadecenoate + H(+)</text>
        <dbReference type="Rhea" id="RHEA:40911"/>
        <dbReference type="ChEBI" id="CHEBI:15377"/>
        <dbReference type="ChEBI" id="CHEBI:15378"/>
        <dbReference type="ChEBI" id="CHEBI:30823"/>
        <dbReference type="ChEBI" id="CHEBI:73004"/>
        <dbReference type="ChEBI" id="CHEBI:73007"/>
    </reaction>
    <physiologicalReaction direction="left-to-right" evidence="2">
        <dbReference type="Rhea" id="RHEA:40912"/>
    </physiologicalReaction>
</comment>
<comment type="catalytic activity">
    <reaction evidence="2">
        <text>1-hexadecanoyl-2-(9Z,12Z-octadecadienoyl)-sn-glycero-3-phosphoethanolamine + H2O = 1-hexadecanoyl-sn-glycero-3-phosphoethanolamine + (9Z,12Z)-octadecadienoate + H(+)</text>
        <dbReference type="Rhea" id="RHEA:40815"/>
        <dbReference type="ChEBI" id="CHEBI:15377"/>
        <dbReference type="ChEBI" id="CHEBI:15378"/>
        <dbReference type="ChEBI" id="CHEBI:30245"/>
        <dbReference type="ChEBI" id="CHEBI:73004"/>
        <dbReference type="ChEBI" id="CHEBI:73008"/>
    </reaction>
    <physiologicalReaction direction="left-to-right" evidence="2">
        <dbReference type="Rhea" id="RHEA:40816"/>
    </physiologicalReaction>
</comment>
<comment type="catalytic activity">
    <reaction evidence="2">
        <text>1-hexadecanoyl-2-(5Z,8Z,11Z,14Z-eicosatetraenoyl)-sn-glycero-3-phosphoethanolamine + H2O = 1-hexadecanoyl-sn-glycero-3-phosphoethanolamine + (5Z,8Z,11Z,14Z)-eicosatetraenoate + H(+)</text>
        <dbReference type="Rhea" id="RHEA:40431"/>
        <dbReference type="ChEBI" id="CHEBI:15377"/>
        <dbReference type="ChEBI" id="CHEBI:15378"/>
        <dbReference type="ChEBI" id="CHEBI:32395"/>
        <dbReference type="ChEBI" id="CHEBI:73004"/>
        <dbReference type="ChEBI" id="CHEBI:73009"/>
    </reaction>
    <physiologicalReaction direction="left-to-right" evidence="2">
        <dbReference type="Rhea" id="RHEA:40432"/>
    </physiologicalReaction>
</comment>
<comment type="catalytic activity">
    <reaction evidence="2">
        <text>N-hexadecanoyl-1,2-di-(9Z-octadecenoyl)-sn-glycero-3-phosphoethanolamine + H2O = N-hexadecanoyl-1-(9Z-octadecenoyl)-sn-glycero-3-phosphoethanolamine + (9Z)-octadecenoate + H(+)</text>
        <dbReference type="Rhea" id="RHEA:45424"/>
        <dbReference type="ChEBI" id="CHEBI:15377"/>
        <dbReference type="ChEBI" id="CHEBI:15378"/>
        <dbReference type="ChEBI" id="CHEBI:30823"/>
        <dbReference type="ChEBI" id="CHEBI:78097"/>
        <dbReference type="ChEBI" id="CHEBI:85217"/>
    </reaction>
    <physiologicalReaction direction="left-to-right" evidence="2">
        <dbReference type="Rhea" id="RHEA:45425"/>
    </physiologicalReaction>
</comment>
<comment type="catalytic activity">
    <reaction evidence="2">
        <text>1,2-dihexadecanoyl-sn-glycero-3-phospho-(1'-sn-glycerol) + H2O = 1-hexadecanoyl-sn-glycero-3-phospho-(1'-sn-glycerol) + hexadecanoate + H(+)</text>
        <dbReference type="Rhea" id="RHEA:45472"/>
        <dbReference type="ChEBI" id="CHEBI:7896"/>
        <dbReference type="ChEBI" id="CHEBI:15377"/>
        <dbReference type="ChEBI" id="CHEBI:15378"/>
        <dbReference type="ChEBI" id="CHEBI:72829"/>
        <dbReference type="ChEBI" id="CHEBI:75158"/>
    </reaction>
    <physiologicalReaction direction="left-to-right" evidence="2">
        <dbReference type="Rhea" id="RHEA:45473"/>
    </physiologicalReaction>
</comment>
<comment type="catalytic activity">
    <reaction evidence="2">
        <text>1-hexadecanoyl-2-(9Z-octadecenoyl)-sn-glycero-3-phosphoglycerol + H2O = 1-hexadecanoyl-sn-glycero-3-phosphoglycerol + (9Z)-octadecenoate + H(+)</text>
        <dbReference type="Rhea" id="RHEA:44524"/>
        <dbReference type="ChEBI" id="CHEBI:15377"/>
        <dbReference type="ChEBI" id="CHEBI:15378"/>
        <dbReference type="ChEBI" id="CHEBI:30823"/>
        <dbReference type="ChEBI" id="CHEBI:84472"/>
        <dbReference type="ChEBI" id="CHEBI:84475"/>
    </reaction>
    <physiologicalReaction direction="left-to-right" evidence="2">
        <dbReference type="Rhea" id="RHEA:44525"/>
    </physiologicalReaction>
</comment>
<comment type="catalytic activity">
    <reaction evidence="2">
        <text>1-hexadecanoyl-2-(9Z-octadecenoyl)-sn-glycero-3-phospho-(1'-sn-glycerol) + H2O = 1-hexadecanoyl-sn-glycero-3-phospho-(1'-sn-glycerol) + (9Z)-octadecenoate + H(+)</text>
        <dbReference type="Rhea" id="RHEA:40919"/>
        <dbReference type="ChEBI" id="CHEBI:15377"/>
        <dbReference type="ChEBI" id="CHEBI:15378"/>
        <dbReference type="ChEBI" id="CHEBI:30823"/>
        <dbReference type="ChEBI" id="CHEBI:72841"/>
        <dbReference type="ChEBI" id="CHEBI:75158"/>
    </reaction>
    <physiologicalReaction direction="left-to-right" evidence="2">
        <dbReference type="Rhea" id="RHEA:40920"/>
    </physiologicalReaction>
</comment>
<comment type="catalytic activity">
    <reaction evidence="3 4 10">
        <text>a 1,2-diacyl-sn-glycero-3-phosphocholine + H2O = a 1-acyl-sn-glycero-3-phosphocholine + a fatty acid + H(+)</text>
        <dbReference type="Rhea" id="RHEA:15801"/>
        <dbReference type="ChEBI" id="CHEBI:15377"/>
        <dbReference type="ChEBI" id="CHEBI:15378"/>
        <dbReference type="ChEBI" id="CHEBI:28868"/>
        <dbReference type="ChEBI" id="CHEBI:57643"/>
        <dbReference type="ChEBI" id="CHEBI:58168"/>
        <dbReference type="EC" id="3.1.1.4"/>
    </reaction>
</comment>
<comment type="catalytic activity">
    <reaction evidence="2">
        <text>1,2-dihexadecanoyl-sn-glycero-3-phosphocholine + H2O = 1-hexadecanoyl-sn-glycero-3-phosphocholine + hexadecanoate + H(+)</text>
        <dbReference type="Rhea" id="RHEA:41223"/>
        <dbReference type="ChEBI" id="CHEBI:7896"/>
        <dbReference type="ChEBI" id="CHEBI:15377"/>
        <dbReference type="ChEBI" id="CHEBI:15378"/>
        <dbReference type="ChEBI" id="CHEBI:72998"/>
        <dbReference type="ChEBI" id="CHEBI:72999"/>
    </reaction>
    <physiologicalReaction direction="left-to-right" evidence="2">
        <dbReference type="Rhea" id="RHEA:41224"/>
    </physiologicalReaction>
</comment>
<comment type="catalytic activity">
    <reaction evidence="2">
        <text>1-hexadecanoyl-2-(9Z-octadecenoyl)-sn-glycero-3-phosphocholine + H2O = 1-hexadecanoyl-sn-glycero-3-phosphocholine + (9Z)-octadecenoate + H(+)</text>
        <dbReference type="Rhea" id="RHEA:38779"/>
        <dbReference type="ChEBI" id="CHEBI:15377"/>
        <dbReference type="ChEBI" id="CHEBI:15378"/>
        <dbReference type="ChEBI" id="CHEBI:30823"/>
        <dbReference type="ChEBI" id="CHEBI:72998"/>
        <dbReference type="ChEBI" id="CHEBI:73001"/>
    </reaction>
    <physiologicalReaction direction="left-to-right" evidence="2">
        <dbReference type="Rhea" id="RHEA:38780"/>
    </physiologicalReaction>
</comment>
<comment type="catalytic activity">
    <reaction evidence="2">
        <text>1-hexadecanoyl-2-(9Z,12Z-octadecadienoyl)-sn-glycero-3-phosphocholine + H2O = (9Z,12Z)-octadecadienoate + 1-hexadecanoyl-sn-glycero-3-phosphocholine + H(+)</text>
        <dbReference type="Rhea" id="RHEA:40811"/>
        <dbReference type="ChEBI" id="CHEBI:15377"/>
        <dbReference type="ChEBI" id="CHEBI:15378"/>
        <dbReference type="ChEBI" id="CHEBI:30245"/>
        <dbReference type="ChEBI" id="CHEBI:72998"/>
        <dbReference type="ChEBI" id="CHEBI:73002"/>
    </reaction>
    <physiologicalReaction direction="left-to-right" evidence="2">
        <dbReference type="Rhea" id="RHEA:40812"/>
    </physiologicalReaction>
</comment>
<comment type="catalytic activity">
    <reaction evidence="2">
        <text>1-hexadecanoyl-2-(4Z,7Z,10Z,13Z,16Z,19Z-docosahexaenoyl)-sn-glycero-3-phosphocholine + H2O = (4Z,7Z,10Z,13Z,16Z,19Z)-docosahexaenoate + 1-hexadecanoyl-sn-glycero-3-phosphocholine + H(+)</text>
        <dbReference type="Rhea" id="RHEA:41231"/>
        <dbReference type="ChEBI" id="CHEBI:15377"/>
        <dbReference type="ChEBI" id="CHEBI:15378"/>
        <dbReference type="ChEBI" id="CHEBI:72998"/>
        <dbReference type="ChEBI" id="CHEBI:74963"/>
        <dbReference type="ChEBI" id="CHEBI:77016"/>
    </reaction>
    <physiologicalReaction direction="left-to-right" evidence="2">
        <dbReference type="Rhea" id="RHEA:41232"/>
    </physiologicalReaction>
</comment>
<comment type="cofactor">
    <cofactor evidence="2">
        <name>Ca(2+)</name>
        <dbReference type="ChEBI" id="CHEBI:29108"/>
    </cofactor>
    <text evidence="2">Binds 1 Ca(2+) ion per subunit.</text>
</comment>
<comment type="subcellular location">
    <subcellularLocation>
        <location evidence="2">Secreted</location>
    </subcellularLocation>
    <subcellularLocation>
        <location evidence="2">Cell membrane</location>
        <topology evidence="2">Peripheral membrane protein</topology>
    </subcellularLocation>
    <subcellularLocation>
        <location evidence="2">Mitochondrion outer membrane</location>
        <topology evidence="2">Peripheral membrane protein</topology>
    </subcellularLocation>
</comment>
<comment type="tissue specificity">
    <text evidence="7 9">Mainly in the Paneth cells adjacent to the stem population in the small intestines.</text>
</comment>
<comment type="induction">
    <text evidence="7">Up-regulated upon dextran sodium sulfate-induced inflammation in gastrointestinal tract.</text>
</comment>
<comment type="polymorphism">
    <text evidence="8">In strains 129/Sv, B10.RIII and C57BL/6, a polymorphism causes a frameshift and premature truncation of the protein, rendering it inactive. Strains BALB/c, C3H/He, DBA/1, DBA/2, MRL and NZB/B1N contain the normal protein while strain CD-1 is heterozygous for the mutation.</text>
</comment>
<comment type="similarity">
    <text evidence="11">Belongs to the phospholipase A2 family.</text>
</comment>
<comment type="sequence caution" evidence="11">
    <conflict type="erroneous initiation">
        <sequence resource="EMBL-CDS" id="AAB06315"/>
    </conflict>
</comment>
<feature type="signal peptide">
    <location>
        <begin position="1"/>
        <end position="21"/>
    </location>
</feature>
<feature type="chain" id="PRO_0000022751" description="Phospholipase A2, membrane associated">
    <location>
        <begin position="22"/>
        <end position="146"/>
    </location>
</feature>
<feature type="active site" evidence="1">
    <location>
        <position position="68"/>
    </location>
</feature>
<feature type="active site" evidence="1">
    <location>
        <position position="113"/>
    </location>
</feature>
<feature type="binding site" evidence="2">
    <location>
        <position position="48"/>
    </location>
    <ligand>
        <name>Ca(2+)</name>
        <dbReference type="ChEBI" id="CHEBI:29108"/>
    </ligand>
</feature>
<feature type="binding site" evidence="2">
    <location>
        <position position="50"/>
    </location>
    <ligand>
        <name>Ca(2+)</name>
        <dbReference type="ChEBI" id="CHEBI:29108"/>
    </ligand>
</feature>
<feature type="binding site" evidence="2">
    <location>
        <position position="52"/>
    </location>
    <ligand>
        <name>Ca(2+)</name>
        <dbReference type="ChEBI" id="CHEBI:29108"/>
    </ligand>
</feature>
<feature type="binding site" evidence="2">
    <location>
        <position position="69"/>
    </location>
    <ligand>
        <name>Ca(2+)</name>
        <dbReference type="ChEBI" id="CHEBI:29108"/>
    </ligand>
</feature>
<feature type="site" description="Important for integrin binding" evidence="2">
    <location>
        <position position="122"/>
    </location>
</feature>
<feature type="disulfide bond" evidence="2">
    <location>
        <begin position="47"/>
        <end position="139"/>
    </location>
</feature>
<feature type="disulfide bond" evidence="2">
    <location>
        <begin position="49"/>
        <end position="65"/>
    </location>
</feature>
<feature type="disulfide bond" evidence="2">
    <location>
        <begin position="64"/>
        <end position="119"/>
    </location>
</feature>
<feature type="disulfide bond" evidence="2">
    <location>
        <begin position="70"/>
        <end position="146"/>
    </location>
</feature>
<feature type="disulfide bond" evidence="2">
    <location>
        <begin position="71"/>
        <end position="112"/>
    </location>
</feature>
<feature type="disulfide bond" evidence="2">
    <location>
        <begin position="80"/>
        <end position="105"/>
    </location>
</feature>
<feature type="disulfide bond" evidence="2">
    <location>
        <begin position="98"/>
        <end position="110"/>
    </location>
</feature>
<feature type="sequence conflict" description="In Ref. 1; CAA52325." evidence="11" ref="1">
    <original>V</original>
    <variation>D</variation>
    <location>
        <position position="19"/>
    </location>
</feature>
<feature type="sequence conflict" description="In Ref. 1; CAA52325." evidence="11" ref="1">
    <original>K</original>
    <variation>T</variation>
    <location>
        <position position="86"/>
    </location>
</feature>
<dbReference type="EC" id="3.1.1.4" evidence="10"/>
<dbReference type="EMBL" id="X74266">
    <property type="protein sequence ID" value="CAA52325.1"/>
    <property type="molecule type" value="mRNA"/>
</dbReference>
<dbReference type="EMBL" id="U32358">
    <property type="protein sequence ID" value="AAC52252.1"/>
    <property type="molecule type" value="Genomic_DNA"/>
</dbReference>
<dbReference type="EMBL" id="U28244">
    <property type="protein sequence ID" value="AAB06315.1"/>
    <property type="status" value="ALT_INIT"/>
    <property type="molecule type" value="mRNA"/>
</dbReference>
<dbReference type="EMBL" id="BC045156">
    <property type="protein sequence ID" value="AAH45156.1"/>
    <property type="molecule type" value="mRNA"/>
</dbReference>
<dbReference type="PIR" id="I48342">
    <property type="entry name" value="I48342"/>
</dbReference>
<dbReference type="PIR" id="S29495">
    <property type="entry name" value="S29495"/>
</dbReference>
<dbReference type="RefSeq" id="NP_001076000.1">
    <property type="nucleotide sequence ID" value="NM_001082531.1"/>
</dbReference>
<dbReference type="SMR" id="P31482"/>
<dbReference type="BioGRID" id="202219">
    <property type="interactions" value="4"/>
</dbReference>
<dbReference type="FunCoup" id="P31482">
    <property type="interactions" value="498"/>
</dbReference>
<dbReference type="BindingDB" id="P31482"/>
<dbReference type="ChEMBL" id="CHEMBL5761"/>
<dbReference type="PhosphoSitePlus" id="P31482"/>
<dbReference type="DNASU" id="18780"/>
<dbReference type="GeneID" id="18780"/>
<dbReference type="KEGG" id="mmu:18780"/>
<dbReference type="UCSC" id="uc008vlk.1">
    <property type="organism name" value="mouse"/>
</dbReference>
<dbReference type="AGR" id="MGI:104642"/>
<dbReference type="CTD" id="5320"/>
<dbReference type="MGI" id="MGI:104642">
    <property type="gene designation" value="Pla2g2a"/>
</dbReference>
<dbReference type="InParanoid" id="P31482"/>
<dbReference type="PhylomeDB" id="P31482"/>
<dbReference type="Reactome" id="R-MMU-1482788">
    <property type="pathway name" value="Acyl chain remodelling of PC"/>
</dbReference>
<dbReference type="Reactome" id="R-MMU-1482801">
    <property type="pathway name" value="Acyl chain remodelling of PS"/>
</dbReference>
<dbReference type="Reactome" id="R-MMU-1482839">
    <property type="pathway name" value="Acyl chain remodelling of PE"/>
</dbReference>
<dbReference type="Reactome" id="R-MMU-1482922">
    <property type="pathway name" value="Acyl chain remodelling of PI"/>
</dbReference>
<dbReference type="Reactome" id="R-MMU-1482925">
    <property type="pathway name" value="Acyl chain remodelling of PG"/>
</dbReference>
<dbReference type="Reactome" id="R-MMU-1483166">
    <property type="pathway name" value="Synthesis of PA"/>
</dbReference>
<dbReference type="Reactome" id="R-MMU-6803157">
    <property type="pathway name" value="Antimicrobial peptides"/>
</dbReference>
<dbReference type="BioGRID-ORCS" id="18780">
    <property type="hits" value="2 hits in 26 CRISPR screens"/>
</dbReference>
<dbReference type="PRO" id="PR:P31482"/>
<dbReference type="Proteomes" id="UP000000589">
    <property type="component" value="Unplaced"/>
</dbReference>
<dbReference type="RNAct" id="P31482">
    <property type="molecule type" value="protein"/>
</dbReference>
<dbReference type="GO" id="GO:0005576">
    <property type="term" value="C:extracellular region"/>
    <property type="evidence" value="ECO:0007669"/>
    <property type="project" value="UniProtKB-SubCell"/>
</dbReference>
<dbReference type="GO" id="GO:0005741">
    <property type="term" value="C:mitochondrial outer membrane"/>
    <property type="evidence" value="ECO:0007669"/>
    <property type="project" value="UniProtKB-SubCell"/>
</dbReference>
<dbReference type="GO" id="GO:0005739">
    <property type="term" value="C:mitochondrion"/>
    <property type="evidence" value="ECO:0007005"/>
    <property type="project" value="MGI"/>
</dbReference>
<dbReference type="GO" id="GO:0005886">
    <property type="term" value="C:plasma membrane"/>
    <property type="evidence" value="ECO:0007669"/>
    <property type="project" value="UniProtKB-SubCell"/>
</dbReference>
<dbReference type="GO" id="GO:0005509">
    <property type="term" value="F:calcium ion binding"/>
    <property type="evidence" value="ECO:0007669"/>
    <property type="project" value="InterPro"/>
</dbReference>
<dbReference type="GO" id="GO:0047498">
    <property type="term" value="F:calcium-dependent phospholipase A2 activity"/>
    <property type="evidence" value="ECO:0000250"/>
    <property type="project" value="UniProtKB"/>
</dbReference>
<dbReference type="GO" id="GO:0050482">
    <property type="term" value="P:arachidonate secretion"/>
    <property type="evidence" value="ECO:0007669"/>
    <property type="project" value="InterPro"/>
</dbReference>
<dbReference type="GO" id="GO:0008283">
    <property type="term" value="P:cell population proliferation"/>
    <property type="evidence" value="ECO:0000316"/>
    <property type="project" value="MGI"/>
</dbReference>
<dbReference type="GO" id="GO:0050830">
    <property type="term" value="P:defense response to Gram-positive bacterium"/>
    <property type="evidence" value="ECO:0000315"/>
    <property type="project" value="UniProtKB"/>
</dbReference>
<dbReference type="GO" id="GO:0006954">
    <property type="term" value="P:inflammatory response"/>
    <property type="evidence" value="ECO:0007669"/>
    <property type="project" value="UniProtKB-KW"/>
</dbReference>
<dbReference type="GO" id="GO:0036335">
    <property type="term" value="P:intestinal stem cell homeostasis"/>
    <property type="evidence" value="ECO:0000315"/>
    <property type="project" value="UniProtKB"/>
</dbReference>
<dbReference type="GO" id="GO:0031640">
    <property type="term" value="P:killing of cells of another organism"/>
    <property type="evidence" value="ECO:0007669"/>
    <property type="project" value="UniProtKB-KW"/>
</dbReference>
<dbReference type="GO" id="GO:0016042">
    <property type="term" value="P:lipid catabolic process"/>
    <property type="evidence" value="ECO:0007669"/>
    <property type="project" value="UniProtKB-KW"/>
</dbReference>
<dbReference type="GO" id="GO:0008285">
    <property type="term" value="P:negative regulation of cell population proliferation"/>
    <property type="evidence" value="ECO:0000316"/>
    <property type="project" value="MGI"/>
</dbReference>
<dbReference type="GO" id="GO:0050680">
    <property type="term" value="P:negative regulation of epithelial cell proliferation"/>
    <property type="evidence" value="ECO:0000316"/>
    <property type="project" value="MGI"/>
</dbReference>
<dbReference type="GO" id="GO:0046470">
    <property type="term" value="P:phosphatidylcholine metabolic process"/>
    <property type="evidence" value="ECO:0000250"/>
    <property type="project" value="UniProtKB"/>
</dbReference>
<dbReference type="GO" id="GO:0046337">
    <property type="term" value="P:phosphatidylethanolamine metabolic process"/>
    <property type="evidence" value="ECO:0000250"/>
    <property type="project" value="UniProtKB"/>
</dbReference>
<dbReference type="GO" id="GO:0001516">
    <property type="term" value="P:prostaglandin biosynthetic process"/>
    <property type="evidence" value="ECO:0000314"/>
    <property type="project" value="UniProtKB"/>
</dbReference>
<dbReference type="GO" id="GO:0042127">
    <property type="term" value="P:regulation of cell population proliferation"/>
    <property type="evidence" value="ECO:0000316"/>
    <property type="project" value="MGI"/>
</dbReference>
<dbReference type="GO" id="GO:0001936">
    <property type="term" value="P:regulation of endothelial cell proliferation"/>
    <property type="evidence" value="ECO:0000316"/>
    <property type="project" value="MGI"/>
</dbReference>
<dbReference type="GO" id="GO:0050678">
    <property type="term" value="P:regulation of epithelial cell proliferation"/>
    <property type="evidence" value="ECO:0000316"/>
    <property type="project" value="MGI"/>
</dbReference>
<dbReference type="GO" id="GO:1902563">
    <property type="term" value="P:regulation of neutrophil activation"/>
    <property type="evidence" value="ECO:0000250"/>
    <property type="project" value="UniProtKB"/>
</dbReference>
<dbReference type="GO" id="GO:0035019">
    <property type="term" value="P:somatic stem cell population maintenance"/>
    <property type="evidence" value="ECO:0000316"/>
    <property type="project" value="MGI"/>
</dbReference>
<dbReference type="CDD" id="cd00125">
    <property type="entry name" value="PLA2c"/>
    <property type="match status" value="1"/>
</dbReference>
<dbReference type="FunFam" id="1.20.90.10:FF:000001">
    <property type="entry name" value="Basic phospholipase A2 homolog"/>
    <property type="match status" value="1"/>
</dbReference>
<dbReference type="Gene3D" id="1.20.90.10">
    <property type="entry name" value="Phospholipase A2 domain"/>
    <property type="match status" value="1"/>
</dbReference>
<dbReference type="InterPro" id="IPR001211">
    <property type="entry name" value="PLipase_A2"/>
</dbReference>
<dbReference type="InterPro" id="IPR033112">
    <property type="entry name" value="PLipase_A2_Asp_AS"/>
</dbReference>
<dbReference type="InterPro" id="IPR016090">
    <property type="entry name" value="PLipase_A2_dom"/>
</dbReference>
<dbReference type="InterPro" id="IPR036444">
    <property type="entry name" value="PLipase_A2_dom_sf"/>
</dbReference>
<dbReference type="InterPro" id="IPR033113">
    <property type="entry name" value="PLipase_A2_His_AS"/>
</dbReference>
<dbReference type="PANTHER" id="PTHR11716">
    <property type="entry name" value="PHOSPHOLIPASE A2 FAMILY MEMBER"/>
    <property type="match status" value="1"/>
</dbReference>
<dbReference type="PANTHER" id="PTHR11716:SF9">
    <property type="entry name" value="PHOSPHOLIPASE A2, MEMBRANE ASSOCIATED"/>
    <property type="match status" value="1"/>
</dbReference>
<dbReference type="Pfam" id="PF00068">
    <property type="entry name" value="Phospholip_A2_1"/>
    <property type="match status" value="1"/>
</dbReference>
<dbReference type="PRINTS" id="PR00389">
    <property type="entry name" value="PHPHLIPASEA2"/>
</dbReference>
<dbReference type="SMART" id="SM00085">
    <property type="entry name" value="PA2c"/>
    <property type="match status" value="1"/>
</dbReference>
<dbReference type="SUPFAM" id="SSF48619">
    <property type="entry name" value="Phospholipase A2, PLA2"/>
    <property type="match status" value="1"/>
</dbReference>
<dbReference type="PROSITE" id="PS00119">
    <property type="entry name" value="PA2_ASP"/>
    <property type="match status" value="1"/>
</dbReference>
<dbReference type="PROSITE" id="PS00118">
    <property type="entry name" value="PA2_HIS"/>
    <property type="match status" value="1"/>
</dbReference>
<reference key="1">
    <citation type="submission" date="1994-10" db="EMBL/GenBank/DDBJ databases">
        <authorList>
            <person name="Mulherkar R."/>
        </authorList>
    </citation>
    <scope>NUCLEOTIDE SEQUENCE</scope>
    <source>
        <strain>BALB/cJ</strain>
    </source>
</reference>
<reference key="2">
    <citation type="journal article" date="1995" name="J. Biol. Chem.">
        <title>A natural disruption of the secretory group II phospholipase A2 gene in inbred mouse strains.</title>
        <authorList>
            <person name="Kennedy B.P."/>
            <person name="Payette P."/>
            <person name="Mudgett J."/>
            <person name="Vadas P."/>
            <person name="Pruzanski W."/>
            <person name="Ywan M."/>
            <person name="Tang C."/>
            <person name="Rancourt D.E."/>
            <person name="Cromlish W."/>
        </authorList>
    </citation>
    <scope>NUCLEOTIDE SEQUENCE [GENOMIC DNA]</scope>
    <scope>POLYMORPHISM</scope>
    <source>
        <strain>BALB/cJ</strain>
        <strain>CD-1</strain>
        <tissue>Intestine</tissue>
    </source>
</reference>
<reference key="3">
    <citation type="journal article" date="1995" name="Cell">
        <title>The secretory phospholipase A2 gene is a candidate for the Mom1 locus, a major modifier of ApcMin-induced intestinal neoplasia.</title>
        <authorList>
            <person name="MacPhee M."/>
            <person name="Chepenik K.P."/>
            <person name="Liddell R.A."/>
            <person name="Nelson K.K."/>
            <person name="Siracusa L.D."/>
            <person name="Buchberg A.M."/>
        </authorList>
    </citation>
    <scope>NUCLEOTIDE SEQUENCE [MRNA]</scope>
    <source>
        <strain>C3H/HeJ</strain>
    </source>
</reference>
<reference key="4">
    <citation type="journal article" date="2004" name="Genome Res.">
        <title>The status, quality, and expansion of the NIH full-length cDNA project: the Mammalian Gene Collection (MGC).</title>
        <authorList>
            <consortium name="The MGC Project Team"/>
        </authorList>
    </citation>
    <scope>NUCLEOTIDE SEQUENCE [LARGE SCALE MRNA]</scope>
    <source>
        <strain>FVB/N</strain>
        <tissue>Colon</tissue>
    </source>
</reference>
<reference key="5">
    <citation type="journal article" date="1993" name="Biochem. Biophys. Res. Commun.">
        <title>Enhancing factor, a Paneth cell specific protein from mouse small intestines: predicted amino acid sequence from RT-PCR amplified cDNA and its expression.</title>
        <authorList>
            <person name="Mulherkar R."/>
            <person name="Rao R.S."/>
            <person name="Wagle A.S."/>
            <person name="Patki V."/>
            <person name="Deo M.G."/>
        </authorList>
    </citation>
    <scope>NUCLEOTIDE SEQUENCE [MRNA] OF 22-146</scope>
    <scope>TISSUE SPECIFICITY</scope>
    <source>
        <strain>BALB/cJ</strain>
        <tissue>Small intestine</tissue>
    </source>
</reference>
<reference key="6">
    <citation type="journal article" date="1993" name="Biochem. Biophys. Res. Commun.">
        <authorList>
            <person name="Mulherkar R."/>
            <person name="Rao R.S."/>
            <person name="Wagle A.S."/>
            <person name="Patki V."/>
            <person name="Deo M.G."/>
        </authorList>
    </citation>
    <scope>ERRATUM OF PUBMED:8267767</scope>
</reference>
<reference key="7">
    <citation type="journal article" date="1993" name="FEBS Lett.">
        <title>Enhancing factor protein from mouse small intestines belongs to the phospholipase A2 family.</title>
        <authorList>
            <person name="Mulherkar R."/>
            <person name="Rao R."/>
            <person name="Rao L."/>
            <person name="Patki V."/>
            <person name="Chauhan V.S."/>
            <person name="Deo M.G."/>
        </authorList>
    </citation>
    <scope>PRELIMINARY PROTEIN SEQUENCE OF 22-41</scope>
    <scope>FUNCTION</scope>
    <scope>CATALYTIC ACTIVITY</scope>
    <source>
        <tissue>Small intestine</tissue>
    </source>
</reference>
<reference key="8">
    <citation type="journal article" date="1999" name="J. Immunol.">
        <title>Protection by group II phospholipase A2 against Staphylococcus aureus.</title>
        <authorList>
            <person name="Laine V.J."/>
            <person name="Grass D.S."/>
            <person name="Nevalainen T.J."/>
        </authorList>
    </citation>
    <scope>FUNCTION</scope>
</reference>
<reference key="9">
    <citation type="journal article" date="2002" name="J. Biol. Chem.">
        <title>Bactericidal properties of human and murine groups I, II, V, X, and XII secreted phospholipases A(2).</title>
        <authorList>
            <person name="Koduri R.S."/>
            <person name="Groenroos J.O."/>
            <person name="Laine V.J."/>
            <person name="Le Calvez C."/>
            <person name="Lambeau G."/>
            <person name="Nevalainen T.J."/>
            <person name="Gelb M.H."/>
        </authorList>
    </citation>
    <scope>FUNCTION</scope>
</reference>
<reference key="10">
    <citation type="journal article" date="2016" name="Cell Stem Cell">
        <title>Secreted Phospholipases A2 Are Intestinal Stem Cell Niche Factors with Distinct Roles in Homeostasis, Inflammation, and Cancer.</title>
        <authorList>
            <person name="Schewe M."/>
            <person name="Franken P.F."/>
            <person name="Sacchetti A."/>
            <person name="Schmitt M."/>
            <person name="Joosten R."/>
            <person name="Boettcher R."/>
            <person name="van Royen M.E."/>
            <person name="Jeammet L."/>
            <person name="Payre C."/>
            <person name="Scott P.M."/>
            <person name="Webb N.R."/>
            <person name="Gelb M."/>
            <person name="Cormier R.T."/>
            <person name="Lambeau G."/>
            <person name="Fodde R."/>
        </authorList>
    </citation>
    <scope>FUNCTION</scope>
    <scope>TISSUE SPECIFICITY</scope>
    <scope>INDUCTION</scope>
</reference>
<name>PA2GA_MOUSE</name>
<gene>
    <name type="primary">Pla2g2a</name>
</gene>
<protein>
    <recommendedName>
        <fullName>Phospholipase A2, membrane associated</fullName>
        <ecNumber evidence="10">3.1.1.4</ecNumber>
    </recommendedName>
    <alternativeName>
        <fullName>Enhancing factor</fullName>
        <shortName>EF</shortName>
    </alternativeName>
    <alternativeName>
        <fullName>GIIC sPLA2</fullName>
    </alternativeName>
    <alternativeName>
        <fullName>Group IIA phospholipase A2</fullName>
    </alternativeName>
    <alternativeName>
        <fullName>Phosphatidylcholine 2-acylhydrolase 2A</fullName>
    </alternativeName>
</protein>
<accession>P31482</accession>
<accession>Q60871</accession>
<keyword id="KW-0929">Antimicrobial</keyword>
<keyword id="KW-0081">Bacteriolytic enzyme</keyword>
<keyword id="KW-0106">Calcium</keyword>
<keyword id="KW-1003">Cell membrane</keyword>
<keyword id="KW-0903">Direct protein sequencing</keyword>
<keyword id="KW-1015">Disulfide bond</keyword>
<keyword id="KW-0341">Growth regulation</keyword>
<keyword id="KW-0378">Hydrolase</keyword>
<keyword id="KW-0395">Inflammatory response</keyword>
<keyword id="KW-0442">Lipid degradation</keyword>
<keyword id="KW-0443">Lipid metabolism</keyword>
<keyword id="KW-0472">Membrane</keyword>
<keyword id="KW-0479">Metal-binding</keyword>
<keyword id="KW-0496">Mitochondrion</keyword>
<keyword id="KW-1000">Mitochondrion outer membrane</keyword>
<keyword id="KW-1208">Phospholipid metabolism</keyword>
<keyword id="KW-1185">Reference proteome</keyword>
<keyword id="KW-0964">Secreted</keyword>
<keyword id="KW-0732">Signal</keyword>
<proteinExistence type="evidence at protein level"/>